<feature type="chain" id="PRO_1000141705" description="DNA-directed RNA polymerase subunit beta">
    <location>
        <begin position="1"/>
        <end position="1228"/>
    </location>
</feature>
<proteinExistence type="inferred from homology"/>
<accession>B0SAG1</accession>
<comment type="function">
    <text evidence="1">DNA-dependent RNA polymerase catalyzes the transcription of DNA into RNA using the four ribonucleoside triphosphates as substrates.</text>
</comment>
<comment type="catalytic activity">
    <reaction evidence="1">
        <text>RNA(n) + a ribonucleoside 5'-triphosphate = RNA(n+1) + diphosphate</text>
        <dbReference type="Rhea" id="RHEA:21248"/>
        <dbReference type="Rhea" id="RHEA-COMP:14527"/>
        <dbReference type="Rhea" id="RHEA-COMP:17342"/>
        <dbReference type="ChEBI" id="CHEBI:33019"/>
        <dbReference type="ChEBI" id="CHEBI:61557"/>
        <dbReference type="ChEBI" id="CHEBI:140395"/>
        <dbReference type="EC" id="2.7.7.6"/>
    </reaction>
</comment>
<comment type="subunit">
    <text evidence="1">The RNAP catalytic core consists of 2 alpha, 1 beta, 1 beta' and 1 omega subunit. When a sigma factor is associated with the core the holoenzyme is formed, which can initiate transcription.</text>
</comment>
<comment type="similarity">
    <text evidence="1">Belongs to the RNA polymerase beta chain family.</text>
</comment>
<keyword id="KW-0240">DNA-directed RNA polymerase</keyword>
<keyword id="KW-0548">Nucleotidyltransferase</keyword>
<keyword id="KW-0804">Transcription</keyword>
<keyword id="KW-0808">Transferase</keyword>
<reference key="1">
    <citation type="journal article" date="2008" name="PLoS ONE">
        <title>Genome sequence of the saprophyte Leptospira biflexa provides insights into the evolution of Leptospira and the pathogenesis of leptospirosis.</title>
        <authorList>
            <person name="Picardeau M."/>
            <person name="Bulach D.M."/>
            <person name="Bouchier C."/>
            <person name="Zuerner R.L."/>
            <person name="Zidane N."/>
            <person name="Wilson P.J."/>
            <person name="Creno S."/>
            <person name="Kuczek E.S."/>
            <person name="Bommezzadri S."/>
            <person name="Davis J.C."/>
            <person name="McGrath A."/>
            <person name="Johnson M.J."/>
            <person name="Boursaux-Eude C."/>
            <person name="Seemann T."/>
            <person name="Rouy Z."/>
            <person name="Coppel R.L."/>
            <person name="Rood J.I."/>
            <person name="Lajus A."/>
            <person name="Davies J.K."/>
            <person name="Medigue C."/>
            <person name="Adler B."/>
        </authorList>
    </citation>
    <scope>NUCLEOTIDE SEQUENCE [LARGE SCALE GENOMIC DNA]</scope>
    <source>
        <strain>Patoc 1 / Ames</strain>
    </source>
</reference>
<evidence type="ECO:0000255" key="1">
    <source>
        <dbReference type="HAMAP-Rule" id="MF_01321"/>
    </source>
</evidence>
<sequence>MHTRMQIRNRVNFGKITDLNLLPNLIYVQKKSFDWFLQSEVKDPTKRLNQGLEAVFRESFPIESPNNDMVMEYGHYVLGEPKRDPQECKDTDSSFAVPLKAVIRLIIKDTGEIREQVVYMGDLPVMTDHGTFIINGAERVVVSQLHRSPGIFFSYDQVRDTFSARVIPYRGSWLEFEMDNKGILVAKIDRKKNFPATLLVKAMGMGTNEEVLRLFYGSSKMKIAGANPKDLKRLIGRRTIADIINMETGEVMLDAGSKINEDNISILREMKVKEVDVIEFPKGKDNPVLINCLEKDGVNDYEDAVKKFHTIMRPGEPSTIENAEAELKRLFFSPKTFDLGIVGRYKINSKFEFNNPKEFSKADDRVLRKQDIIETVRYLVMLMSEAENYYPDDIDHLGNRRIRSVGELIANQLKLGFSRVERVIKERMTVQEPEQQTPQLLISIKPITAVINEFFGSSQLSQFMDQTNPLAELTHKRRLNALGPGGLSRDRAGFEVRDVHYSHYGRMCPIETPEGPNIGLILSMSSFARVNDYGFIETPYRLVKNGKVQKQVEYLTADKEEYHYMAQSNSTVDEKGEFTSKLISTRHRGDFPFRSPAEIQYMDLAPLQVVSVSTALIPFLEHDDANRALMGSNMQRQAVPLLTEEAPFVGTGMEARAAYDAGVCIVAKKDGVVSKVDATGVWIKEDQSKEIVHYPLIKFKKTNQGTCFNQKPNVSMLHTTTGGKVSKVSKERVEVTTPNGEKETHELLLSDEVQFHAVVKEGQEVGIGAPVAGQIIKGEKYGDFGQILQKGTVLANGPSTDAGYLALGRNVLVAFMPWEGYNFEDAILISERIIKDDVFSSIHIEEFEIQARETKLGQEQITRDIPNLSDKAFRDLDESGVIRVGAEVKPGDILVGMVTPKGETDLTPEYKLLHSIFGEKAKEVRDSSLRMPNGFEGTVIDIKRYSRETGDELAAGVEEMVKVYVARKRKLLVGDKMAGRHGNKGVVARVMAQEDMPYMEDGSPVDIVLNPLGVPSRMNLGQIFETQLGFAAKKLGINFETPVFDGASEGDVNDFCKKAGLPENSKFQLYDGRTGEKFINQVFCGYIYMLKLAHLVDDKIHARSTGPYSLVTQQPLGGKAQFGGQRLGEMEVWALEAYGASHTLQELLTIKSDDMLGRARIYEAIVKGIHSIKPGIPESFNVLVQELRGLALDIIIKDSEGLEVDISDYEDEFSKNKKKIKFETIENV</sequence>
<organism>
    <name type="scientific">Leptospira biflexa serovar Patoc (strain Patoc 1 / Ames)</name>
    <dbReference type="NCBI Taxonomy" id="355278"/>
    <lineage>
        <taxon>Bacteria</taxon>
        <taxon>Pseudomonadati</taxon>
        <taxon>Spirochaetota</taxon>
        <taxon>Spirochaetia</taxon>
        <taxon>Leptospirales</taxon>
        <taxon>Leptospiraceae</taxon>
        <taxon>Leptospira</taxon>
    </lineage>
</organism>
<gene>
    <name evidence="1" type="primary">rpoB</name>
    <name type="ordered locus">LBF_1920</name>
</gene>
<protein>
    <recommendedName>
        <fullName evidence="1">DNA-directed RNA polymerase subunit beta</fullName>
        <shortName evidence="1">RNAP subunit beta</shortName>
        <ecNumber evidence="1">2.7.7.6</ecNumber>
    </recommendedName>
    <alternativeName>
        <fullName evidence="1">RNA polymerase subunit beta</fullName>
    </alternativeName>
    <alternativeName>
        <fullName evidence="1">Transcriptase subunit beta</fullName>
    </alternativeName>
</protein>
<dbReference type="EC" id="2.7.7.6" evidence="1"/>
<dbReference type="EMBL" id="CP000777">
    <property type="protein sequence ID" value="ABZ94424.1"/>
    <property type="molecule type" value="Genomic_DNA"/>
</dbReference>
<dbReference type="RefSeq" id="WP_012476298.1">
    <property type="nucleotide sequence ID" value="NC_010842.1"/>
</dbReference>
<dbReference type="SMR" id="B0SAG1"/>
<dbReference type="KEGG" id="lbf:LBF_1920"/>
<dbReference type="HOGENOM" id="CLU_000524_4_1_12"/>
<dbReference type="GO" id="GO:0000428">
    <property type="term" value="C:DNA-directed RNA polymerase complex"/>
    <property type="evidence" value="ECO:0007669"/>
    <property type="project" value="UniProtKB-KW"/>
</dbReference>
<dbReference type="GO" id="GO:0003677">
    <property type="term" value="F:DNA binding"/>
    <property type="evidence" value="ECO:0007669"/>
    <property type="project" value="UniProtKB-UniRule"/>
</dbReference>
<dbReference type="GO" id="GO:0003899">
    <property type="term" value="F:DNA-directed RNA polymerase activity"/>
    <property type="evidence" value="ECO:0007669"/>
    <property type="project" value="UniProtKB-UniRule"/>
</dbReference>
<dbReference type="GO" id="GO:0032549">
    <property type="term" value="F:ribonucleoside binding"/>
    <property type="evidence" value="ECO:0007669"/>
    <property type="project" value="InterPro"/>
</dbReference>
<dbReference type="GO" id="GO:0006351">
    <property type="term" value="P:DNA-templated transcription"/>
    <property type="evidence" value="ECO:0007669"/>
    <property type="project" value="UniProtKB-UniRule"/>
</dbReference>
<dbReference type="CDD" id="cd00653">
    <property type="entry name" value="RNA_pol_B_RPB2"/>
    <property type="match status" value="1"/>
</dbReference>
<dbReference type="Gene3D" id="2.40.50.100">
    <property type="match status" value="1"/>
</dbReference>
<dbReference type="Gene3D" id="2.40.50.150">
    <property type="match status" value="1"/>
</dbReference>
<dbReference type="Gene3D" id="3.90.1100.10">
    <property type="match status" value="2"/>
</dbReference>
<dbReference type="Gene3D" id="2.40.270.10">
    <property type="entry name" value="DNA-directed RNA polymerase, subunit 2, domain 6"/>
    <property type="match status" value="2"/>
</dbReference>
<dbReference type="Gene3D" id="3.90.1800.10">
    <property type="entry name" value="RNA polymerase alpha subunit dimerisation domain"/>
    <property type="match status" value="1"/>
</dbReference>
<dbReference type="Gene3D" id="3.90.1110.10">
    <property type="entry name" value="RNA polymerase Rpb2, domain 2"/>
    <property type="match status" value="1"/>
</dbReference>
<dbReference type="HAMAP" id="MF_01321">
    <property type="entry name" value="RNApol_bact_RpoB"/>
    <property type="match status" value="1"/>
</dbReference>
<dbReference type="InterPro" id="IPR019462">
    <property type="entry name" value="DNA-dir_RNA_pol_bsu_external_1"/>
</dbReference>
<dbReference type="InterPro" id="IPR015712">
    <property type="entry name" value="DNA-dir_RNA_pol_su2"/>
</dbReference>
<dbReference type="InterPro" id="IPR007120">
    <property type="entry name" value="DNA-dir_RNAP_su2_dom"/>
</dbReference>
<dbReference type="InterPro" id="IPR037033">
    <property type="entry name" value="DNA-dir_RNAP_su2_hyb_sf"/>
</dbReference>
<dbReference type="InterPro" id="IPR010243">
    <property type="entry name" value="RNA_pol_bsu_bac"/>
</dbReference>
<dbReference type="InterPro" id="IPR007121">
    <property type="entry name" value="RNA_pol_bsu_CS"/>
</dbReference>
<dbReference type="InterPro" id="IPR007644">
    <property type="entry name" value="RNA_pol_bsu_protrusion"/>
</dbReference>
<dbReference type="InterPro" id="IPR007642">
    <property type="entry name" value="RNA_pol_Rpb2_2"/>
</dbReference>
<dbReference type="InterPro" id="IPR037034">
    <property type="entry name" value="RNA_pol_Rpb2_2_sf"/>
</dbReference>
<dbReference type="InterPro" id="IPR007645">
    <property type="entry name" value="RNA_pol_Rpb2_3"/>
</dbReference>
<dbReference type="InterPro" id="IPR007641">
    <property type="entry name" value="RNA_pol_Rpb2_7"/>
</dbReference>
<dbReference type="InterPro" id="IPR014724">
    <property type="entry name" value="RNA_pol_RPB2_OB-fold"/>
</dbReference>
<dbReference type="NCBIfam" id="TIGR02013">
    <property type="entry name" value="rpoB"/>
    <property type="match status" value="1"/>
</dbReference>
<dbReference type="PANTHER" id="PTHR20856">
    <property type="entry name" value="DNA-DIRECTED RNA POLYMERASE I SUBUNIT 2"/>
    <property type="match status" value="1"/>
</dbReference>
<dbReference type="Pfam" id="PF04563">
    <property type="entry name" value="RNA_pol_Rpb2_1"/>
    <property type="match status" value="1"/>
</dbReference>
<dbReference type="Pfam" id="PF04561">
    <property type="entry name" value="RNA_pol_Rpb2_2"/>
    <property type="match status" value="2"/>
</dbReference>
<dbReference type="Pfam" id="PF04565">
    <property type="entry name" value="RNA_pol_Rpb2_3"/>
    <property type="match status" value="1"/>
</dbReference>
<dbReference type="Pfam" id="PF10385">
    <property type="entry name" value="RNA_pol_Rpb2_45"/>
    <property type="match status" value="1"/>
</dbReference>
<dbReference type="Pfam" id="PF00562">
    <property type="entry name" value="RNA_pol_Rpb2_6"/>
    <property type="match status" value="1"/>
</dbReference>
<dbReference type="Pfam" id="PF04560">
    <property type="entry name" value="RNA_pol_Rpb2_7"/>
    <property type="match status" value="1"/>
</dbReference>
<dbReference type="SUPFAM" id="SSF64484">
    <property type="entry name" value="beta and beta-prime subunits of DNA dependent RNA-polymerase"/>
    <property type="match status" value="1"/>
</dbReference>
<dbReference type="PROSITE" id="PS01166">
    <property type="entry name" value="RNA_POL_BETA"/>
    <property type="match status" value="1"/>
</dbReference>
<name>RPOB_LEPBA</name>